<comment type="function">
    <text>Rapidly hydrolyzes choline released into the synapse.</text>
</comment>
<comment type="catalytic activity">
    <reaction>
        <text>acetylcholine + H2O = choline + acetate + H(+)</text>
        <dbReference type="Rhea" id="RHEA:17561"/>
        <dbReference type="ChEBI" id="CHEBI:15354"/>
        <dbReference type="ChEBI" id="CHEBI:15355"/>
        <dbReference type="ChEBI" id="CHEBI:15377"/>
        <dbReference type="ChEBI" id="CHEBI:15378"/>
        <dbReference type="ChEBI" id="CHEBI:30089"/>
        <dbReference type="EC" id="3.1.1.7"/>
    </reaction>
</comment>
<comment type="subunit">
    <text evidence="1">Oligomer composed of disulfide-linked homodimers.</text>
</comment>
<comment type="subcellular location">
    <subcellularLocation>
        <location evidence="1">Synapse</location>
    </subcellularLocation>
    <subcellularLocation>
        <location evidence="1">Secreted</location>
    </subcellularLocation>
    <subcellularLocation>
        <location evidence="1">Cell membrane</location>
        <topology evidence="1">Peripheral membrane protein</topology>
    </subcellularLocation>
    <text evidence="1">May be secreted or membrane associated via a non-catalytic subunit.</text>
</comment>
<comment type="similarity">
    <text evidence="4">Belongs to the type-B carboxylesterase/lipase family.</text>
</comment>
<dbReference type="EC" id="3.1.1.7"/>
<dbReference type="EMBL" id="U41846">
    <property type="protein sequence ID" value="AAB41269.1"/>
    <property type="molecule type" value="Genomic_DNA"/>
</dbReference>
<dbReference type="EMBL" id="HE600961">
    <property type="protein sequence ID" value="CAP34096.3"/>
    <property type="molecule type" value="Genomic_DNA"/>
</dbReference>
<dbReference type="SMR" id="Q27459"/>
<dbReference type="FunCoup" id="Q27459">
    <property type="interactions" value="168"/>
</dbReference>
<dbReference type="STRING" id="6238.Q27459"/>
<dbReference type="ESTHER" id="caebr-ACHE1">
    <property type="family name" value="ACHE"/>
</dbReference>
<dbReference type="MEROPS" id="S09.979"/>
<dbReference type="GlyCosmos" id="Q27459">
    <property type="glycosylation" value="4 sites, No reported glycans"/>
</dbReference>
<dbReference type="EnsemblMetazoa" id="CBG16374.1">
    <property type="protein sequence ID" value="CBG16374.1"/>
    <property type="gene ID" value="WBGene00036330"/>
</dbReference>
<dbReference type="KEGG" id="cbr:CBG_16374"/>
<dbReference type="CTD" id="8585625"/>
<dbReference type="WormBase" id="CBG16374">
    <property type="protein sequence ID" value="CBP03902"/>
    <property type="gene ID" value="WBGene00036330"/>
    <property type="gene designation" value="Cbr-ace-1"/>
</dbReference>
<dbReference type="eggNOG" id="KOG4389">
    <property type="taxonomic scope" value="Eukaryota"/>
</dbReference>
<dbReference type="HOGENOM" id="CLU_006586_13_0_1"/>
<dbReference type="InParanoid" id="Q27459"/>
<dbReference type="OMA" id="TCSVNEM"/>
<dbReference type="OrthoDB" id="19653at2759"/>
<dbReference type="Proteomes" id="UP000008549">
    <property type="component" value="Unassembled WGS sequence"/>
</dbReference>
<dbReference type="GO" id="GO:0005615">
    <property type="term" value="C:extracellular space"/>
    <property type="evidence" value="ECO:0000318"/>
    <property type="project" value="GO_Central"/>
</dbReference>
<dbReference type="GO" id="GO:0005886">
    <property type="term" value="C:plasma membrane"/>
    <property type="evidence" value="ECO:0000318"/>
    <property type="project" value="GO_Central"/>
</dbReference>
<dbReference type="GO" id="GO:0045202">
    <property type="term" value="C:synapse"/>
    <property type="evidence" value="ECO:0007669"/>
    <property type="project" value="UniProtKB-SubCell"/>
</dbReference>
<dbReference type="GO" id="GO:0003990">
    <property type="term" value="F:acetylcholinesterase activity"/>
    <property type="evidence" value="ECO:0000318"/>
    <property type="project" value="GO_Central"/>
</dbReference>
<dbReference type="GO" id="GO:0042802">
    <property type="term" value="F:identical protein binding"/>
    <property type="evidence" value="ECO:0007669"/>
    <property type="project" value="EnsemblMetazoa"/>
</dbReference>
<dbReference type="GO" id="GO:0006581">
    <property type="term" value="P:acetylcholine catabolic process"/>
    <property type="evidence" value="ECO:0000318"/>
    <property type="project" value="GO_Central"/>
</dbReference>
<dbReference type="GO" id="GO:0019695">
    <property type="term" value="P:choline metabolic process"/>
    <property type="evidence" value="ECO:0000318"/>
    <property type="project" value="GO_Central"/>
</dbReference>
<dbReference type="GO" id="GO:0040012">
    <property type="term" value="P:regulation of locomotion"/>
    <property type="evidence" value="ECO:0007669"/>
    <property type="project" value="EnsemblMetazoa"/>
</dbReference>
<dbReference type="CDD" id="cd00312">
    <property type="entry name" value="Esterase_lipase"/>
    <property type="match status" value="1"/>
</dbReference>
<dbReference type="FunFam" id="3.40.50.1820:FF:000476">
    <property type="entry name" value="Carboxylic ester hydrolase"/>
    <property type="match status" value="1"/>
</dbReference>
<dbReference type="Gene3D" id="3.40.50.1820">
    <property type="entry name" value="alpha/beta hydrolase"/>
    <property type="match status" value="1"/>
</dbReference>
<dbReference type="InterPro" id="IPR029058">
    <property type="entry name" value="AB_hydrolase_fold"/>
</dbReference>
<dbReference type="InterPro" id="IPR050654">
    <property type="entry name" value="AChE-related_enzymes"/>
</dbReference>
<dbReference type="InterPro" id="IPR002018">
    <property type="entry name" value="CarbesteraseB"/>
</dbReference>
<dbReference type="InterPro" id="IPR019826">
    <property type="entry name" value="Carboxylesterase_B_AS"/>
</dbReference>
<dbReference type="InterPro" id="IPR019819">
    <property type="entry name" value="Carboxylesterase_B_CS"/>
</dbReference>
<dbReference type="InterPro" id="IPR000997">
    <property type="entry name" value="Cholinesterase"/>
</dbReference>
<dbReference type="PANTHER" id="PTHR43918">
    <property type="entry name" value="ACETYLCHOLINESTERASE"/>
    <property type="match status" value="1"/>
</dbReference>
<dbReference type="PANTHER" id="PTHR43918:SF12">
    <property type="entry name" value="ACETYLCHOLINESTERASE 1"/>
    <property type="match status" value="1"/>
</dbReference>
<dbReference type="Pfam" id="PF00135">
    <property type="entry name" value="COesterase"/>
    <property type="match status" value="1"/>
</dbReference>
<dbReference type="PRINTS" id="PR00878">
    <property type="entry name" value="CHOLNESTRASE"/>
</dbReference>
<dbReference type="SUPFAM" id="SSF53474">
    <property type="entry name" value="alpha/beta-Hydrolases"/>
    <property type="match status" value="1"/>
</dbReference>
<dbReference type="PROSITE" id="PS00122">
    <property type="entry name" value="CARBOXYLESTERASE_B_1"/>
    <property type="match status" value="1"/>
</dbReference>
<dbReference type="PROSITE" id="PS00941">
    <property type="entry name" value="CARBOXYLESTERASE_B_2"/>
    <property type="match status" value="1"/>
</dbReference>
<protein>
    <recommendedName>
        <fullName>Acetylcholinesterase 1</fullName>
        <shortName>AChE 1</shortName>
        <ecNumber>3.1.1.7</ecNumber>
    </recommendedName>
</protein>
<keyword id="KW-1003">Cell membrane</keyword>
<keyword id="KW-1015">Disulfide bond</keyword>
<keyword id="KW-0325">Glycoprotein</keyword>
<keyword id="KW-0378">Hydrolase</keyword>
<keyword id="KW-0472">Membrane</keyword>
<keyword id="KW-0531">Neurotransmitter degradation</keyword>
<keyword id="KW-1185">Reference proteome</keyword>
<keyword id="KW-0964">Secreted</keyword>
<keyword id="KW-0719">Serine esterase</keyword>
<keyword id="KW-0732">Signal</keyword>
<keyword id="KW-0770">Synapse</keyword>
<accession>Q27459</accession>
<accession>A8XNK7</accession>
<proteinExistence type="inferred from homology"/>
<sequence length="620" mass="71501">MRYSLLFFIFLPCVITAVDLIHLHDGSPLFGEEVLSQTGKPLTRFLGIPFAEPPIGNLRFRKPKPKQPWRIPFNATTPPNSCIQSEDTYFGDFYGSTMWNPNTKLSEDCLYLNVYVPGKVDPNKKLAVMIWVYGGGFWSGTSTLDVYDGRILTVEENVILVAMNYRVSIFGFLYMNRSEAPGNMGMWDQLLAMKWVHKNIDLFGGDTSRITLFGESAGAASVSIHMLSQKSAPYFHRAIIQSGSATSPWAIEPRDVALARAVILYNAMKCGNMSLISPDYDRILDCFQRADADALRENEWAPVREFGDFPWVPVVDGDFLLENAQTSLKQGNFKKTQLLAGSNRDESIYFLTYQLPDIFPVADFFSKSEFIKDRQTWIKGVKDLLPRQILKCQLTLAAVLHEYEPQDLPISAQNWLNAMDKMLGDYHFTCSVNEMALAHTKHGGDTFYYYFTHRATQQTWPEWMGVLHGYEINFIFGEPFNQKRFNYTDEERELSNRFMRYWANFAKTGDPNKNEDGSFTQDIWPKYNSVSMEYMNMTVESSYPGQNRIGHGPRRKECAFWKAYLPNLMAAVADVGDPYLVWKQQMDKWQNEYITDWQYHFEQYKRYQTYRQSDSETCGG</sequence>
<reference key="1">
    <citation type="journal article" date="1996" name="DNA Seq.">
        <title>Sequence comparison of ACE-1, the gene encoding acetylcholinesterase of class A, in the two nematodes Caenorhabditis elegans and Caenorhabditis briggsae.</title>
        <authorList>
            <person name="Grauso M."/>
            <person name="Culetto E."/>
            <person name="Berge J.-B."/>
            <person name="Toutant J.-P."/>
            <person name="Arpagaus M."/>
        </authorList>
    </citation>
    <scope>NUCLEOTIDE SEQUENCE [GENOMIC DNA]</scope>
</reference>
<reference key="2">
    <citation type="journal article" date="2003" name="PLoS Biol.">
        <title>The genome sequence of Caenorhabditis briggsae: a platform for comparative genomics.</title>
        <authorList>
            <person name="Stein L.D."/>
            <person name="Bao Z."/>
            <person name="Blasiar D."/>
            <person name="Blumenthal T."/>
            <person name="Brent M.R."/>
            <person name="Chen N."/>
            <person name="Chinwalla A."/>
            <person name="Clarke L."/>
            <person name="Clee C."/>
            <person name="Coghlan A."/>
            <person name="Coulson A."/>
            <person name="D'Eustachio P."/>
            <person name="Fitch D.H.A."/>
            <person name="Fulton L.A."/>
            <person name="Fulton R.E."/>
            <person name="Griffiths-Jones S."/>
            <person name="Harris T.W."/>
            <person name="Hillier L.W."/>
            <person name="Kamath R."/>
            <person name="Kuwabara P.E."/>
            <person name="Mardis E.R."/>
            <person name="Marra M.A."/>
            <person name="Miner T.L."/>
            <person name="Minx P."/>
            <person name="Mullikin J.C."/>
            <person name="Plumb R.W."/>
            <person name="Rogers J."/>
            <person name="Schein J.E."/>
            <person name="Sohrmann M."/>
            <person name="Spieth J."/>
            <person name="Stajich J.E."/>
            <person name="Wei C."/>
            <person name="Willey D."/>
            <person name="Wilson R.K."/>
            <person name="Durbin R.M."/>
            <person name="Waterston R.H."/>
        </authorList>
    </citation>
    <scope>NUCLEOTIDE SEQUENCE [LARGE SCALE GENOMIC DNA]</scope>
    <source>
        <strain>AF16</strain>
    </source>
</reference>
<feature type="signal peptide" evidence="2">
    <location>
        <begin position="1"/>
        <end position="31"/>
    </location>
</feature>
<feature type="chain" id="PRO_0000008609" description="Acetylcholinesterase 1">
    <location>
        <begin position="32"/>
        <end position="620"/>
    </location>
</feature>
<feature type="active site" description="Acyl-ester intermediate" evidence="3">
    <location>
        <position position="216"/>
    </location>
</feature>
<feature type="active site" description="Charge relay system" evidence="1">
    <location>
        <position position="346"/>
    </location>
</feature>
<feature type="active site" description="Charge relay system" evidence="1">
    <location>
        <position position="468"/>
    </location>
</feature>
<feature type="glycosylation site" description="N-linked (GlcNAc...) asparagine" evidence="2">
    <location>
        <position position="74"/>
    </location>
</feature>
<feature type="glycosylation site" description="N-linked (GlcNAc...) asparagine" evidence="2">
    <location>
        <position position="272"/>
    </location>
</feature>
<feature type="glycosylation site" description="N-linked (GlcNAc...) asparagine" evidence="2">
    <location>
        <position position="486"/>
    </location>
</feature>
<feature type="glycosylation site" description="N-linked (GlcNAc...) asparagine" evidence="2">
    <location>
        <position position="536"/>
    </location>
</feature>
<feature type="disulfide bond" evidence="1">
    <location>
        <begin position="82"/>
        <end position="109"/>
    </location>
</feature>
<feature type="disulfide bond" evidence="1">
    <location>
        <begin position="270"/>
        <end position="286"/>
    </location>
</feature>
<feature type="disulfide bond" evidence="1">
    <location>
        <begin position="430"/>
        <end position="558"/>
    </location>
</feature>
<feature type="disulfide bond" description="Interchain" evidence="1">
    <location>
        <position position="618"/>
    </location>
</feature>
<gene>
    <name type="primary">ace-1</name>
    <name type="ORF">CBG16374</name>
</gene>
<name>ACE1_CAEBR</name>
<evidence type="ECO:0000250" key="1"/>
<evidence type="ECO:0000255" key="2"/>
<evidence type="ECO:0000255" key="3">
    <source>
        <dbReference type="PROSITE-ProRule" id="PRU10039"/>
    </source>
</evidence>
<evidence type="ECO:0000305" key="4"/>
<organism>
    <name type="scientific">Caenorhabditis briggsae</name>
    <dbReference type="NCBI Taxonomy" id="6238"/>
    <lineage>
        <taxon>Eukaryota</taxon>
        <taxon>Metazoa</taxon>
        <taxon>Ecdysozoa</taxon>
        <taxon>Nematoda</taxon>
        <taxon>Chromadorea</taxon>
        <taxon>Rhabditida</taxon>
        <taxon>Rhabditina</taxon>
        <taxon>Rhabditomorpha</taxon>
        <taxon>Rhabditoidea</taxon>
        <taxon>Rhabditidae</taxon>
        <taxon>Peloderinae</taxon>
        <taxon>Caenorhabditis</taxon>
    </lineage>
</organism>